<keyword id="KW-0687">Ribonucleoprotein</keyword>
<keyword id="KW-0689">Ribosomal protein</keyword>
<keyword id="KW-0694">RNA-binding</keyword>
<keyword id="KW-0699">rRNA-binding</keyword>
<evidence type="ECO:0000255" key="1">
    <source>
        <dbReference type="HAMAP-Rule" id="MF_01367"/>
    </source>
</evidence>
<evidence type="ECO:0000305" key="2"/>
<feature type="chain" id="PRO_1000055743" description="Large ribosomal subunit protein uL14">
    <location>
        <begin position="1"/>
        <end position="122"/>
    </location>
</feature>
<protein>
    <recommendedName>
        <fullName evidence="1">Large ribosomal subunit protein uL14</fullName>
    </recommendedName>
    <alternativeName>
        <fullName evidence="2">50S ribosomal protein L14</fullName>
    </alternativeName>
</protein>
<reference key="1">
    <citation type="submission" date="2007-05" db="EMBL/GenBank/DDBJ databases">
        <title>Complete sequence of Thermotoga petrophila RKU-1.</title>
        <authorList>
            <consortium name="US DOE Joint Genome Institute"/>
            <person name="Copeland A."/>
            <person name="Lucas S."/>
            <person name="Lapidus A."/>
            <person name="Barry K."/>
            <person name="Glavina del Rio T."/>
            <person name="Dalin E."/>
            <person name="Tice H."/>
            <person name="Pitluck S."/>
            <person name="Sims D."/>
            <person name="Brettin T."/>
            <person name="Bruce D."/>
            <person name="Detter J.C."/>
            <person name="Han C."/>
            <person name="Tapia R."/>
            <person name="Schmutz J."/>
            <person name="Larimer F."/>
            <person name="Land M."/>
            <person name="Hauser L."/>
            <person name="Kyrpides N."/>
            <person name="Mikhailova N."/>
            <person name="Nelson K."/>
            <person name="Gogarten J.P."/>
            <person name="Noll K."/>
            <person name="Richardson P."/>
        </authorList>
    </citation>
    <scope>NUCLEOTIDE SEQUENCE [LARGE SCALE GENOMIC DNA]</scope>
    <source>
        <strain>ATCC BAA-488 / DSM 13995 / JCM 10881 / RKU-1</strain>
    </source>
</reference>
<dbReference type="EMBL" id="CP000702">
    <property type="protein sequence ID" value="ABQ47316.1"/>
    <property type="molecule type" value="Genomic_DNA"/>
</dbReference>
<dbReference type="RefSeq" id="WP_011943790.1">
    <property type="nucleotide sequence ID" value="NC_009486.1"/>
</dbReference>
<dbReference type="SMR" id="A5IM93"/>
<dbReference type="STRING" id="390874.Tpet_1302"/>
<dbReference type="KEGG" id="tpt:Tpet_1302"/>
<dbReference type="eggNOG" id="COG0093">
    <property type="taxonomic scope" value="Bacteria"/>
</dbReference>
<dbReference type="HOGENOM" id="CLU_095071_2_1_0"/>
<dbReference type="Proteomes" id="UP000006558">
    <property type="component" value="Chromosome"/>
</dbReference>
<dbReference type="GO" id="GO:0022625">
    <property type="term" value="C:cytosolic large ribosomal subunit"/>
    <property type="evidence" value="ECO:0007669"/>
    <property type="project" value="TreeGrafter"/>
</dbReference>
<dbReference type="GO" id="GO:0070180">
    <property type="term" value="F:large ribosomal subunit rRNA binding"/>
    <property type="evidence" value="ECO:0007669"/>
    <property type="project" value="TreeGrafter"/>
</dbReference>
<dbReference type="GO" id="GO:0003735">
    <property type="term" value="F:structural constituent of ribosome"/>
    <property type="evidence" value="ECO:0007669"/>
    <property type="project" value="InterPro"/>
</dbReference>
<dbReference type="GO" id="GO:0006412">
    <property type="term" value="P:translation"/>
    <property type="evidence" value="ECO:0007669"/>
    <property type="project" value="UniProtKB-UniRule"/>
</dbReference>
<dbReference type="CDD" id="cd00337">
    <property type="entry name" value="Ribosomal_uL14"/>
    <property type="match status" value="1"/>
</dbReference>
<dbReference type="FunFam" id="2.40.150.20:FF:000001">
    <property type="entry name" value="50S ribosomal protein L14"/>
    <property type="match status" value="1"/>
</dbReference>
<dbReference type="Gene3D" id="2.40.150.20">
    <property type="entry name" value="Ribosomal protein L14"/>
    <property type="match status" value="1"/>
</dbReference>
<dbReference type="HAMAP" id="MF_01367">
    <property type="entry name" value="Ribosomal_uL14"/>
    <property type="match status" value="1"/>
</dbReference>
<dbReference type="InterPro" id="IPR000218">
    <property type="entry name" value="Ribosomal_uL14"/>
</dbReference>
<dbReference type="InterPro" id="IPR005745">
    <property type="entry name" value="Ribosomal_uL14_bac-type"/>
</dbReference>
<dbReference type="InterPro" id="IPR019972">
    <property type="entry name" value="Ribosomal_uL14_CS"/>
</dbReference>
<dbReference type="InterPro" id="IPR036853">
    <property type="entry name" value="Ribosomal_uL14_sf"/>
</dbReference>
<dbReference type="NCBIfam" id="TIGR01067">
    <property type="entry name" value="rplN_bact"/>
    <property type="match status" value="1"/>
</dbReference>
<dbReference type="PANTHER" id="PTHR11761">
    <property type="entry name" value="50S/60S RIBOSOMAL PROTEIN L14/L23"/>
    <property type="match status" value="1"/>
</dbReference>
<dbReference type="PANTHER" id="PTHR11761:SF3">
    <property type="entry name" value="LARGE RIBOSOMAL SUBUNIT PROTEIN UL14M"/>
    <property type="match status" value="1"/>
</dbReference>
<dbReference type="Pfam" id="PF00238">
    <property type="entry name" value="Ribosomal_L14"/>
    <property type="match status" value="1"/>
</dbReference>
<dbReference type="SMART" id="SM01374">
    <property type="entry name" value="Ribosomal_L14"/>
    <property type="match status" value="1"/>
</dbReference>
<dbReference type="SUPFAM" id="SSF50193">
    <property type="entry name" value="Ribosomal protein L14"/>
    <property type="match status" value="1"/>
</dbReference>
<dbReference type="PROSITE" id="PS00049">
    <property type="entry name" value="RIBOSOMAL_L14"/>
    <property type="match status" value="1"/>
</dbReference>
<organism>
    <name type="scientific">Thermotoga petrophila (strain ATCC BAA-488 / DSM 13995 / JCM 10881 / RKU-1)</name>
    <dbReference type="NCBI Taxonomy" id="390874"/>
    <lineage>
        <taxon>Bacteria</taxon>
        <taxon>Thermotogati</taxon>
        <taxon>Thermotogota</taxon>
        <taxon>Thermotogae</taxon>
        <taxon>Thermotogales</taxon>
        <taxon>Thermotogaceae</taxon>
        <taxon>Thermotoga</taxon>
    </lineage>
</organism>
<proteinExistence type="inferred from homology"/>
<comment type="function">
    <text evidence="1">Binds to 23S rRNA. Forms part of two intersubunit bridges in the 70S ribosome.</text>
</comment>
<comment type="subunit">
    <text evidence="1">Part of the 50S ribosomal subunit. Forms a cluster with proteins L3 and L19. In the 70S ribosome, L14 and L19 interact and together make contacts with the 16S rRNA in bridges B5 and B8.</text>
</comment>
<comment type="similarity">
    <text evidence="1">Belongs to the universal ribosomal protein uL14 family.</text>
</comment>
<gene>
    <name evidence="1" type="primary">rplN</name>
    <name type="ordered locus">Tpet_1302</name>
</gene>
<name>RL14_THEP1</name>
<sequence>MIQQETYLNVADNSGAKKLRVIRVIGGFHKKYGTVGDIVVCSVREAIPNSDVKKGDVVRAVIVRTKKEIRRSDGTYIRFDDNAAVLIDKFNAPRGTRIFGPVARELREKGFMKIVSLAPEVW</sequence>
<accession>A5IM93</accession>